<feature type="chain" id="PRO_0000170464" description="Nucleoid-associated protein VV2410">
    <location>
        <begin position="1"/>
        <end position="109"/>
    </location>
</feature>
<feature type="region of interest" description="Disordered" evidence="2">
    <location>
        <begin position="1"/>
        <end position="22"/>
    </location>
</feature>
<sequence length="109" mass="12018">MFGKGGMGNLMKQAQQMQERMQKLQEEIANMEVVGESGAGLVKVTITGSHSVRRVNIDESLMEDDKEMLEDLIAAAFNDAARRVEETQKEKMAAITGGMQLPPGMKMPF</sequence>
<organism>
    <name type="scientific">Vibrio vulnificus (strain YJ016)</name>
    <dbReference type="NCBI Taxonomy" id="196600"/>
    <lineage>
        <taxon>Bacteria</taxon>
        <taxon>Pseudomonadati</taxon>
        <taxon>Pseudomonadota</taxon>
        <taxon>Gammaproteobacteria</taxon>
        <taxon>Vibrionales</taxon>
        <taxon>Vibrionaceae</taxon>
        <taxon>Vibrio</taxon>
    </lineage>
</organism>
<comment type="function">
    <text evidence="1">Binds to DNA and alters its conformation. May be involved in regulation of gene expression, nucleoid organization and DNA protection.</text>
</comment>
<comment type="subunit">
    <text evidence="1">Homodimer.</text>
</comment>
<comment type="subcellular location">
    <subcellularLocation>
        <location evidence="1">Cytoplasm</location>
        <location evidence="1">Nucleoid</location>
    </subcellularLocation>
</comment>
<comment type="similarity">
    <text evidence="1">Belongs to the YbaB/EbfC family.</text>
</comment>
<accession>Q7MIV3</accession>
<proteinExistence type="inferred from homology"/>
<reference key="1">
    <citation type="journal article" date="2003" name="Genome Res.">
        <title>Comparative genome analysis of Vibrio vulnificus, a marine pathogen.</title>
        <authorList>
            <person name="Chen C.-Y."/>
            <person name="Wu K.-M."/>
            <person name="Chang Y.-C."/>
            <person name="Chang C.-H."/>
            <person name="Tsai H.-C."/>
            <person name="Liao T.-L."/>
            <person name="Liu Y.-M."/>
            <person name="Chen H.-J."/>
            <person name="Shen A.B.-T."/>
            <person name="Li J.-C."/>
            <person name="Su T.-L."/>
            <person name="Shao C.-P."/>
            <person name="Lee C.-T."/>
            <person name="Hor L.-I."/>
            <person name="Tsai S.-F."/>
        </authorList>
    </citation>
    <scope>NUCLEOTIDE SEQUENCE [LARGE SCALE GENOMIC DNA]</scope>
    <source>
        <strain>YJ016</strain>
    </source>
</reference>
<protein>
    <recommendedName>
        <fullName evidence="1">Nucleoid-associated protein VV2410</fullName>
    </recommendedName>
</protein>
<dbReference type="EMBL" id="BA000037">
    <property type="protein sequence ID" value="BAC95174.1"/>
    <property type="molecule type" value="Genomic_DNA"/>
</dbReference>
<dbReference type="RefSeq" id="WP_011150874.1">
    <property type="nucleotide sequence ID" value="NC_005139.1"/>
</dbReference>
<dbReference type="SMR" id="Q7MIV3"/>
<dbReference type="STRING" id="672.VV93_v1c21170"/>
<dbReference type="KEGG" id="vvy:VV2410"/>
<dbReference type="eggNOG" id="COG0718">
    <property type="taxonomic scope" value="Bacteria"/>
</dbReference>
<dbReference type="HOGENOM" id="CLU_140930_0_0_6"/>
<dbReference type="Proteomes" id="UP000002675">
    <property type="component" value="Chromosome I"/>
</dbReference>
<dbReference type="GO" id="GO:0043590">
    <property type="term" value="C:bacterial nucleoid"/>
    <property type="evidence" value="ECO:0007669"/>
    <property type="project" value="UniProtKB-UniRule"/>
</dbReference>
<dbReference type="GO" id="GO:0005829">
    <property type="term" value="C:cytosol"/>
    <property type="evidence" value="ECO:0007669"/>
    <property type="project" value="TreeGrafter"/>
</dbReference>
<dbReference type="GO" id="GO:0003677">
    <property type="term" value="F:DNA binding"/>
    <property type="evidence" value="ECO:0007669"/>
    <property type="project" value="UniProtKB-UniRule"/>
</dbReference>
<dbReference type="FunFam" id="3.30.1310.10:FF:000001">
    <property type="entry name" value="Nucleoid-associated protein YbaB"/>
    <property type="match status" value="1"/>
</dbReference>
<dbReference type="Gene3D" id="3.30.1310.10">
    <property type="entry name" value="Nucleoid-associated protein YbaB-like domain"/>
    <property type="match status" value="1"/>
</dbReference>
<dbReference type="HAMAP" id="MF_00274">
    <property type="entry name" value="DNA_YbaB_EbfC"/>
    <property type="match status" value="1"/>
</dbReference>
<dbReference type="InterPro" id="IPR036894">
    <property type="entry name" value="YbaB-like_sf"/>
</dbReference>
<dbReference type="InterPro" id="IPR004401">
    <property type="entry name" value="YbaB/EbfC"/>
</dbReference>
<dbReference type="NCBIfam" id="TIGR00103">
    <property type="entry name" value="DNA_YbaB_EbfC"/>
    <property type="match status" value="1"/>
</dbReference>
<dbReference type="PANTHER" id="PTHR33449">
    <property type="entry name" value="NUCLEOID-ASSOCIATED PROTEIN YBAB"/>
    <property type="match status" value="1"/>
</dbReference>
<dbReference type="PANTHER" id="PTHR33449:SF1">
    <property type="entry name" value="NUCLEOID-ASSOCIATED PROTEIN YBAB"/>
    <property type="match status" value="1"/>
</dbReference>
<dbReference type="Pfam" id="PF02575">
    <property type="entry name" value="YbaB_DNA_bd"/>
    <property type="match status" value="1"/>
</dbReference>
<dbReference type="PIRSF" id="PIRSF004555">
    <property type="entry name" value="UCP004555"/>
    <property type="match status" value="1"/>
</dbReference>
<dbReference type="SUPFAM" id="SSF82607">
    <property type="entry name" value="YbaB-like"/>
    <property type="match status" value="1"/>
</dbReference>
<evidence type="ECO:0000255" key="1">
    <source>
        <dbReference type="HAMAP-Rule" id="MF_00274"/>
    </source>
</evidence>
<evidence type="ECO:0000256" key="2">
    <source>
        <dbReference type="SAM" id="MobiDB-lite"/>
    </source>
</evidence>
<keyword id="KW-0963">Cytoplasm</keyword>
<keyword id="KW-0238">DNA-binding</keyword>
<gene>
    <name type="ordered locus">VV2410</name>
</gene>
<name>Y2410_VIBVY</name>